<accession>Q58T48</accession>
<reference key="1">
    <citation type="journal article" date="2005" name="Eur. J. Immunol.">
        <title>Variety of antimicrobial peptides in the Bombina maxima toad and evidence of their rapid diversification.</title>
        <authorList>
            <person name="Lee W.-H."/>
            <person name="Li Y."/>
            <person name="Lai R."/>
            <person name="Li S."/>
            <person name="Zhang Y."/>
            <person name="Wang W."/>
        </authorList>
    </citation>
    <scope>NUCLEOTIDE SEQUENCE [MRNA]</scope>
    <scope>PROTEIN SEQUENCE OF 44-70 AND 124-143</scope>
    <scope>AMIDATION AT ILE-143</scope>
    <scope>MASS SPECTROMETRY</scope>
    <source>
        <tissue>Skin</tissue>
    </source>
</reference>
<reference key="2">
    <citation type="journal article" date="2002" name="Peptides">
        <title>Antimicrobial peptides from skin secretions of Chinese red belly toad Bombina maxima.</title>
        <authorList>
            <person name="Lai R."/>
            <person name="Zheng Y.-T."/>
            <person name="Shen J.-H."/>
            <person name="Liu G.-J."/>
            <person name="Liu H."/>
            <person name="Lee W.-H."/>
            <person name="Tang S.-Z."/>
            <person name="Zhang Y."/>
        </authorList>
    </citation>
    <scope>PROTEIN SEQUENCE OF 44-70</scope>
    <scope>MASS SPECTROMETRY</scope>
    <scope>FUNCTION OF MAXIMIN-3</scope>
</reference>
<evidence type="ECO:0000250" key="1"/>
<evidence type="ECO:0000255" key="2"/>
<evidence type="ECO:0000269" key="3">
    <source>
    </source>
</evidence>
<evidence type="ECO:0000269" key="4">
    <source>
    </source>
</evidence>
<evidence type="ECO:0000305" key="5"/>
<comment type="function">
    <text evidence="3">Maximin-3 shows antibacterial activity against both Gram-positive and Gram-negative bacteria. It also shows antimicrobial activity against the fungus C.albicans, but not against A.flavus nor P.uticale. It has little hemolytic activity. It possess a significant cytotoxicity against tumor cell lines. It possess a significant anti-HIV activity. It shows high spermicidal activity.</text>
</comment>
<comment type="function">
    <text evidence="1">Maximin-H11 shows antimicrobial activity against bacteria and against the fungus C.albicans. Shows strong hemolytic activity (By similarity).</text>
</comment>
<comment type="subcellular location">
    <subcellularLocation>
        <location>Secreted</location>
    </subcellularLocation>
</comment>
<comment type="tissue specificity">
    <text>Expressed by the skin glands.</text>
</comment>
<comment type="mass spectrometry" mass="2698.0" method="FAB" evidence="3">
    <molecule>Maximin-3</molecule>
</comment>
<comment type="similarity">
    <text evidence="5">Belongs to the bombinin family.</text>
</comment>
<name>M3111_BOMMX</name>
<sequence length="144" mass="16023">MNFKYIVAVSFLIASAYARSVQNDEQSLSQRDVLEEESLREIRGIGGKILSGLKTALKGAAKELASTYLHRKRTAEEHEVMKRLEAVMRDLDSLDYPEEASERETRGFNQDEIANLFTKKEKRILGPVLGLVGSALGGLIKKIG</sequence>
<dbReference type="EMBL" id="AY849012">
    <property type="protein sequence ID" value="AAX50233.1"/>
    <property type="molecule type" value="mRNA"/>
</dbReference>
<dbReference type="SMR" id="Q58T48"/>
<dbReference type="GO" id="GO:0005576">
    <property type="term" value="C:extracellular region"/>
    <property type="evidence" value="ECO:0007669"/>
    <property type="project" value="UniProtKB-SubCell"/>
</dbReference>
<dbReference type="GO" id="GO:0042742">
    <property type="term" value="P:defense response to bacterium"/>
    <property type="evidence" value="ECO:0007669"/>
    <property type="project" value="UniProtKB-KW"/>
</dbReference>
<dbReference type="GO" id="GO:0050832">
    <property type="term" value="P:defense response to fungus"/>
    <property type="evidence" value="ECO:0007669"/>
    <property type="project" value="UniProtKB-KW"/>
</dbReference>
<dbReference type="GO" id="GO:0031640">
    <property type="term" value="P:killing of cells of another organism"/>
    <property type="evidence" value="ECO:0007669"/>
    <property type="project" value="UniProtKB-KW"/>
</dbReference>
<dbReference type="InterPro" id="IPR007962">
    <property type="entry name" value="Bombinin"/>
</dbReference>
<dbReference type="Pfam" id="PF05298">
    <property type="entry name" value="Bombinin"/>
    <property type="match status" value="1"/>
</dbReference>
<protein>
    <recommendedName>
        <fullName>Maximins 3/H11 type 1</fullName>
    </recommendedName>
    <component>
        <recommendedName>
            <fullName>Maximin-3</fullName>
        </recommendedName>
    </component>
    <component>
        <recommendedName>
            <fullName>Maximin-H11</fullName>
        </recommendedName>
    </component>
</protein>
<organism>
    <name type="scientific">Bombina maxima</name>
    <name type="common">Giant fire-bellied toad</name>
    <name type="synonym">Chinese red belly toad</name>
    <dbReference type="NCBI Taxonomy" id="161274"/>
    <lineage>
        <taxon>Eukaryota</taxon>
        <taxon>Metazoa</taxon>
        <taxon>Chordata</taxon>
        <taxon>Craniata</taxon>
        <taxon>Vertebrata</taxon>
        <taxon>Euteleostomi</taxon>
        <taxon>Amphibia</taxon>
        <taxon>Batrachia</taxon>
        <taxon>Anura</taxon>
        <taxon>Bombinatoridae</taxon>
        <taxon>Bombina</taxon>
    </lineage>
</organism>
<feature type="signal peptide" evidence="2">
    <location>
        <begin position="1"/>
        <end position="18"/>
    </location>
</feature>
<feature type="propeptide" id="PRO_0000003140" evidence="3">
    <location>
        <begin position="19"/>
        <end position="43"/>
    </location>
</feature>
<feature type="peptide" id="PRO_0000003141" description="Maximin-3">
    <location>
        <begin position="44"/>
        <end position="70"/>
    </location>
</feature>
<feature type="propeptide" id="PRO_0000003142" evidence="1">
    <location>
        <begin position="73"/>
        <end position="122"/>
    </location>
</feature>
<feature type="peptide" id="PRO_0000003143" description="Maximin-H11">
    <location>
        <begin position="124"/>
        <end position="143"/>
    </location>
</feature>
<feature type="modified residue" description="Isoleucine amide" evidence="4">
    <location>
        <position position="143"/>
    </location>
</feature>
<proteinExistence type="evidence at protein level"/>
<keyword id="KW-0027">Amidation</keyword>
<keyword id="KW-0878">Amphibian defense peptide</keyword>
<keyword id="KW-0044">Antibiotic</keyword>
<keyword id="KW-0929">Antimicrobial</keyword>
<keyword id="KW-0165">Cleavage on pair of basic residues</keyword>
<keyword id="KW-0204">Cytolysis</keyword>
<keyword id="KW-0903">Direct protein sequencing</keyword>
<keyword id="KW-0295">Fungicide</keyword>
<keyword id="KW-0354">Hemolysis</keyword>
<keyword id="KW-0964">Secreted</keyword>
<keyword id="KW-0732">Signal</keyword>